<evidence type="ECO:0000250" key="1"/>
<evidence type="ECO:0000305" key="2"/>
<evidence type="ECO:0007829" key="3">
    <source>
        <dbReference type="PDB" id="7B22"/>
    </source>
</evidence>
<evidence type="ECO:0007829" key="4">
    <source>
        <dbReference type="PDB" id="7R5A"/>
    </source>
</evidence>
<feature type="chain" id="PRO_0000216355" description="Antitoxin ParD">
    <location>
        <begin position="1"/>
        <end position="80"/>
    </location>
</feature>
<feature type="strand" evidence="3">
    <location>
        <begin position="5"/>
        <end position="7"/>
    </location>
</feature>
<feature type="helix" evidence="4">
    <location>
        <begin position="11"/>
        <end position="22"/>
    </location>
</feature>
<feature type="helix" evidence="4">
    <location>
        <begin position="29"/>
        <end position="58"/>
    </location>
</feature>
<feature type="helix" evidence="4">
    <location>
        <begin position="67"/>
        <end position="77"/>
    </location>
</feature>
<reference key="1">
    <citation type="journal article" date="2000" name="Nature">
        <title>DNA sequence of both chromosomes of the cholera pathogen Vibrio cholerae.</title>
        <authorList>
            <person name="Heidelberg J.F."/>
            <person name="Eisen J.A."/>
            <person name="Nelson W.C."/>
            <person name="Clayton R.A."/>
            <person name="Gwinn M.L."/>
            <person name="Dodson R.J."/>
            <person name="Haft D.H."/>
            <person name="Hickey E.K."/>
            <person name="Peterson J.D."/>
            <person name="Umayam L.A."/>
            <person name="Gill S.R."/>
            <person name="Nelson K.E."/>
            <person name="Read T.D."/>
            <person name="Tettelin H."/>
            <person name="Richardson D.L."/>
            <person name="Ermolaeva M.D."/>
            <person name="Vamathevan J.J."/>
            <person name="Bass S."/>
            <person name="Qin H."/>
            <person name="Dragoi I."/>
            <person name="Sellers P."/>
            <person name="McDonald L.A."/>
            <person name="Utterback T.R."/>
            <person name="Fleischmann R.D."/>
            <person name="Nierman W.C."/>
            <person name="White O."/>
            <person name="Salzberg S.L."/>
            <person name="Smith H.O."/>
            <person name="Colwell R.R."/>
            <person name="Mekalanos J.J."/>
            <person name="Venter J.C."/>
            <person name="Fraser C.M."/>
        </authorList>
    </citation>
    <scope>NUCLEOTIDE SEQUENCE [LARGE SCALE GENOMIC DNA]</scope>
    <source>
        <strain>ATCC 39315 / El Tor Inaba N16961</strain>
    </source>
</reference>
<reference key="2">
    <citation type="unpublished observations" date="2001-04">
        <authorList>
            <person name="Medigue C."/>
            <person name="Bocs S."/>
        </authorList>
    </citation>
    <scope>IDENTIFICATION</scope>
</reference>
<organism>
    <name type="scientific">Vibrio cholerae serotype O1 (strain ATCC 39315 / El Tor Inaba N16961)</name>
    <dbReference type="NCBI Taxonomy" id="243277"/>
    <lineage>
        <taxon>Bacteria</taxon>
        <taxon>Pseudomonadati</taxon>
        <taxon>Pseudomonadota</taxon>
        <taxon>Gammaproteobacteria</taxon>
        <taxon>Vibrionales</taxon>
        <taxon>Vibrionaceae</taxon>
        <taxon>Vibrio</taxon>
    </lineage>
</organism>
<proteinExistence type="evidence at protein level"/>
<comment type="function">
    <text evidence="1">Antitoxin component of a type II toxin-antitoxin (TA) system. Neutralizes the effect of toxin ParE (By similarity).</text>
</comment>
<comment type="similarity">
    <text evidence="2">Belongs to the ParD antitoxin family.</text>
</comment>
<accession>P58093</accession>
<keyword id="KW-0002">3D-structure</keyword>
<keyword id="KW-1185">Reference proteome</keyword>
<keyword id="KW-1277">Toxin-antitoxin system</keyword>
<sequence>MAKNTSITLGEHFDGFITSQIQSGRYGSASEVIRSALRLLENQETKLQSLRQLLIEGEQSGDADYDLDSFINELDSENIR</sequence>
<protein>
    <recommendedName>
        <fullName>Antitoxin ParD</fullName>
    </recommendedName>
</protein>
<name>PARD_VIBCH</name>
<gene>
    <name type="primary">parD</name>
    <name type="ordered locus">VC_A0360.1</name>
</gene>
<dbReference type="EMBL" id="AE003853">
    <property type="status" value="NOT_ANNOTATED_CDS"/>
    <property type="molecule type" value="Genomic_DNA"/>
</dbReference>
<dbReference type="RefSeq" id="WP_001107719.1">
    <property type="nucleotide sequence ID" value="NZ_LT906615.1"/>
</dbReference>
<dbReference type="PDB" id="7B22">
    <property type="method" value="X-ray"/>
    <property type="resolution" value="3.08 A"/>
    <property type="chains" value="A/B/C/D/E/F/G/H=1-80"/>
</dbReference>
<dbReference type="PDB" id="7R5A">
    <property type="method" value="X-ray"/>
    <property type="resolution" value="2.95 A"/>
    <property type="chains" value="B/C/D=1-80"/>
</dbReference>
<dbReference type="PDBsum" id="7B22"/>
<dbReference type="PDBsum" id="7R5A"/>
<dbReference type="SASBDB" id="P58093"/>
<dbReference type="SMR" id="P58093"/>
<dbReference type="Proteomes" id="UP000000584">
    <property type="component" value="Chromosome 2"/>
</dbReference>
<dbReference type="GO" id="GO:0097351">
    <property type="term" value="F:toxin sequestering activity"/>
    <property type="evidence" value="ECO:0000318"/>
    <property type="project" value="GO_Central"/>
</dbReference>
<dbReference type="GO" id="GO:0098754">
    <property type="term" value="P:detoxification"/>
    <property type="evidence" value="ECO:0000318"/>
    <property type="project" value="GO_Central"/>
</dbReference>
<dbReference type="GO" id="GO:0006355">
    <property type="term" value="P:regulation of DNA-templated transcription"/>
    <property type="evidence" value="ECO:0007669"/>
    <property type="project" value="InterPro"/>
</dbReference>
<dbReference type="CDD" id="cd22231">
    <property type="entry name" value="RHH_NikR_HicB-like"/>
    <property type="match status" value="1"/>
</dbReference>
<dbReference type="Gene3D" id="6.10.10.120">
    <property type="entry name" value="Antitoxin ParD1-like"/>
    <property type="match status" value="1"/>
</dbReference>
<dbReference type="InterPro" id="IPR022789">
    <property type="entry name" value="ParD"/>
</dbReference>
<dbReference type="InterPro" id="IPR038296">
    <property type="entry name" value="ParD_sf"/>
</dbReference>
<dbReference type="InterPro" id="IPR010985">
    <property type="entry name" value="Ribbon_hlx_hlx"/>
</dbReference>
<dbReference type="NCBIfam" id="TIGR02606">
    <property type="entry name" value="antidote_CC2985"/>
    <property type="match status" value="1"/>
</dbReference>
<dbReference type="PANTHER" id="PTHR36582">
    <property type="entry name" value="ANTITOXIN PARD"/>
    <property type="match status" value="1"/>
</dbReference>
<dbReference type="PANTHER" id="PTHR36582:SF2">
    <property type="entry name" value="ANTITOXIN PARD"/>
    <property type="match status" value="1"/>
</dbReference>
<dbReference type="Pfam" id="PF03693">
    <property type="entry name" value="ParD_antitoxin"/>
    <property type="match status" value="1"/>
</dbReference>
<dbReference type="SUPFAM" id="SSF47598">
    <property type="entry name" value="Ribbon-helix-helix"/>
    <property type="match status" value="1"/>
</dbReference>